<feature type="chain" id="PRO_0000312271" description="ADP-ribosylation factor-like protein 6-interacting protein 4">
    <location>
        <begin position="1"/>
        <end position="229"/>
    </location>
</feature>
<feature type="region of interest" description="Disordered" evidence="3">
    <location>
        <begin position="1"/>
        <end position="152"/>
    </location>
</feature>
<feature type="compositionally biased region" description="Basic residues" evidence="3">
    <location>
        <begin position="1"/>
        <end position="20"/>
    </location>
</feature>
<feature type="compositionally biased region" description="Basic and acidic residues" evidence="3">
    <location>
        <begin position="21"/>
        <end position="35"/>
    </location>
</feature>
<feature type="compositionally biased region" description="Low complexity" evidence="3">
    <location>
        <begin position="66"/>
        <end position="87"/>
    </location>
</feature>
<feature type="compositionally biased region" description="Basic residues" evidence="3">
    <location>
        <begin position="90"/>
        <end position="117"/>
    </location>
</feature>
<feature type="modified residue" description="Phosphoserine" evidence="7">
    <location>
        <position position="140"/>
    </location>
</feature>
<feature type="modified residue" description="Phosphoserine" evidence="2">
    <location>
        <position position="174"/>
    </location>
</feature>
<feature type="cross-link" description="Glycyl lysine isopeptide (Lys-Gly) (interchain with G-Cter in SUMO2)" evidence="2">
    <location>
        <position position="191"/>
    </location>
</feature>
<accession>Q9JM93</accession>
<accession>Q9WUG8</accession>
<keyword id="KW-1017">Isopeptide bond</keyword>
<keyword id="KW-0507">mRNA processing</keyword>
<keyword id="KW-0508">mRNA splicing</keyword>
<keyword id="KW-0539">Nucleus</keyword>
<keyword id="KW-0597">Phosphoprotein</keyword>
<keyword id="KW-1185">Reference proteome</keyword>
<keyword id="KW-0832">Ubl conjugation</keyword>
<evidence type="ECO:0000250" key="1"/>
<evidence type="ECO:0000250" key="2">
    <source>
        <dbReference type="UniProtKB" id="Q66PJ3"/>
    </source>
</evidence>
<evidence type="ECO:0000256" key="3">
    <source>
        <dbReference type="SAM" id="MobiDB-lite"/>
    </source>
</evidence>
<evidence type="ECO:0000269" key="4">
    <source>
    </source>
</evidence>
<evidence type="ECO:0000269" key="5">
    <source>
    </source>
</evidence>
<evidence type="ECO:0000305" key="6"/>
<evidence type="ECO:0007744" key="7">
    <source>
    </source>
</evidence>
<protein>
    <recommendedName>
        <fullName>ADP-ribosylation factor-like protein 6-interacting protein 4</fullName>
        <shortName>ARL-6-interacting protein 4</shortName>
        <shortName>Aip-4</shortName>
    </recommendedName>
    <alternativeName>
        <fullName>Splicing factor SRrp37</fullName>
    </alternativeName>
</protein>
<gene>
    <name type="primary">Arl6ip4</name>
</gene>
<sequence length="229" mass="25525">MAHVGSRKRSRSRSRSRSGRRGSEKRSKRSSKDASRNCSASRSQGHKAGSASGVEERSKHKAQRTSRSSSTSSSSSSSSSASSSSSSDGRKKRAKHKEKKRKKKKKKRKKKLKKRVKEKAVAVHQAEALPGPSLDQWHRSAGEDNDGPVLTDEQKSRIQAMKPMTKEEWDARQSVIRKVVDPETGRTRLIKGDGEVLEEIVTKERHREINKQATRGDGLAFQMRTGLLP</sequence>
<comment type="function">
    <text evidence="1">Involved in modulating alternative pre-mRNA splicing with either 5' distal site activation or preferential use of 3' proximal site.</text>
</comment>
<comment type="subunit">
    <text evidence="1 4">Interacts with ZCCHC17 (By similarity). Interacts with SRSF2 (By similarity). Interacts with ARL6.</text>
</comment>
<comment type="subcellular location">
    <subcellularLocation>
        <location evidence="1">Nucleus</location>
        <location evidence="1">Nucleolus</location>
    </subcellularLocation>
    <subcellularLocation>
        <location evidence="1">Nucleus speckle</location>
    </subcellularLocation>
</comment>
<comment type="tissue specificity">
    <text evidence="5">Widely expressed. Expressed at high level in testis and thymus.</text>
</comment>
<comment type="similarity">
    <text evidence="6">Belongs to the ARL6IP4 family.</text>
</comment>
<comment type="sequence caution" evidence="6">
    <conflict type="miscellaneous discrepancy">
        <sequence resource="EMBL-CDS" id="AAD33049"/>
    </conflict>
    <text>Low quality sequence that contains many discrepancies.</text>
</comment>
<proteinExistence type="evidence at protein level"/>
<dbReference type="EMBL" id="AB035383">
    <property type="protein sequence ID" value="BAA94743.1"/>
    <property type="molecule type" value="mRNA"/>
</dbReference>
<dbReference type="EMBL" id="AK133934">
    <property type="protein sequence ID" value="BAE21935.1"/>
    <property type="molecule type" value="mRNA"/>
</dbReference>
<dbReference type="EMBL" id="BC063748">
    <property type="protein sequence ID" value="AAH63748.1"/>
    <property type="molecule type" value="mRNA"/>
</dbReference>
<dbReference type="EMBL" id="AF133911">
    <property type="protein sequence ID" value="AAD33049.1"/>
    <property type="status" value="ALT_SEQ"/>
    <property type="molecule type" value="mRNA"/>
</dbReference>
<dbReference type="CCDS" id="CCDS19673.1"/>
<dbReference type="PIR" id="JC7219">
    <property type="entry name" value="JC7219"/>
</dbReference>
<dbReference type="RefSeq" id="NP_653092.1">
    <property type="nucleotide sequence ID" value="NM_144509.2"/>
</dbReference>
<dbReference type="BioGRID" id="211131">
    <property type="interactions" value="4"/>
</dbReference>
<dbReference type="FunCoup" id="Q9JM93">
    <property type="interactions" value="151"/>
</dbReference>
<dbReference type="IntAct" id="Q9JM93">
    <property type="interactions" value="2"/>
</dbReference>
<dbReference type="MINT" id="Q9JM93"/>
<dbReference type="STRING" id="10090.ENSMUSP00000031351"/>
<dbReference type="iPTMnet" id="Q9JM93"/>
<dbReference type="PhosphoSitePlus" id="Q9JM93"/>
<dbReference type="jPOST" id="Q9JM93"/>
<dbReference type="PaxDb" id="10090-ENSMUSP00000031351"/>
<dbReference type="ProteomicsDB" id="296276"/>
<dbReference type="Pumba" id="Q9JM93"/>
<dbReference type="Antibodypedia" id="31741">
    <property type="antibodies" value="96 antibodies from 22 providers"/>
</dbReference>
<dbReference type="DNASU" id="65105"/>
<dbReference type="Ensembl" id="ENSMUST00000031351.11">
    <property type="protein sequence ID" value="ENSMUSP00000031351.5"/>
    <property type="gene ID" value="ENSMUSG00000029404.16"/>
</dbReference>
<dbReference type="GeneID" id="65105"/>
<dbReference type="KEGG" id="mmu:65105"/>
<dbReference type="UCSC" id="uc008zoz.1">
    <property type="organism name" value="mouse"/>
</dbReference>
<dbReference type="AGR" id="MGI:1929500"/>
<dbReference type="CTD" id="51329"/>
<dbReference type="MGI" id="MGI:1929500">
    <property type="gene designation" value="Arl6ip4"/>
</dbReference>
<dbReference type="VEuPathDB" id="HostDB:ENSMUSG00000029404"/>
<dbReference type="eggNOG" id="ENOG502RYBZ">
    <property type="taxonomic scope" value="Eukaryota"/>
</dbReference>
<dbReference type="GeneTree" id="ENSGT00390000009670"/>
<dbReference type="InParanoid" id="Q9JM93"/>
<dbReference type="OMA" id="PRVMKPM"/>
<dbReference type="OrthoDB" id="48562at2759"/>
<dbReference type="PhylomeDB" id="Q9JM93"/>
<dbReference type="TreeFam" id="TF350468"/>
<dbReference type="BioGRID-ORCS" id="65105">
    <property type="hits" value="5 hits in 77 CRISPR screens"/>
</dbReference>
<dbReference type="ChiTaRS" id="Arl6ip4">
    <property type="organism name" value="mouse"/>
</dbReference>
<dbReference type="PRO" id="PR:Q9JM93"/>
<dbReference type="Proteomes" id="UP000000589">
    <property type="component" value="Chromosome 5"/>
</dbReference>
<dbReference type="RNAct" id="Q9JM93">
    <property type="molecule type" value="protein"/>
</dbReference>
<dbReference type="Bgee" id="ENSMUSG00000029404">
    <property type="expression patterns" value="Expressed in floor plate of midbrain and 271 other cell types or tissues"/>
</dbReference>
<dbReference type="ExpressionAtlas" id="Q9JM93">
    <property type="expression patterns" value="baseline and differential"/>
</dbReference>
<dbReference type="GO" id="GO:0016607">
    <property type="term" value="C:nuclear speck"/>
    <property type="evidence" value="ECO:0007669"/>
    <property type="project" value="UniProtKB-SubCell"/>
</dbReference>
<dbReference type="GO" id="GO:0005730">
    <property type="term" value="C:nucleolus"/>
    <property type="evidence" value="ECO:0007669"/>
    <property type="project" value="UniProtKB-SubCell"/>
</dbReference>
<dbReference type="GO" id="GO:0006397">
    <property type="term" value="P:mRNA processing"/>
    <property type="evidence" value="ECO:0007669"/>
    <property type="project" value="UniProtKB-KW"/>
</dbReference>
<dbReference type="GO" id="GO:0008380">
    <property type="term" value="P:RNA splicing"/>
    <property type="evidence" value="ECO:0007669"/>
    <property type="project" value="UniProtKB-KW"/>
</dbReference>
<dbReference type="InterPro" id="IPR019532">
    <property type="entry name" value="Nucl_RNA-splicing_assoc_SR-25"/>
</dbReference>
<dbReference type="Pfam" id="PF10500">
    <property type="entry name" value="SR-25"/>
    <property type="match status" value="1"/>
</dbReference>
<organism>
    <name type="scientific">Mus musculus</name>
    <name type="common">Mouse</name>
    <dbReference type="NCBI Taxonomy" id="10090"/>
    <lineage>
        <taxon>Eukaryota</taxon>
        <taxon>Metazoa</taxon>
        <taxon>Chordata</taxon>
        <taxon>Craniata</taxon>
        <taxon>Vertebrata</taxon>
        <taxon>Euteleostomi</taxon>
        <taxon>Mammalia</taxon>
        <taxon>Eutheria</taxon>
        <taxon>Euarchontoglires</taxon>
        <taxon>Glires</taxon>
        <taxon>Rodentia</taxon>
        <taxon>Myomorpha</taxon>
        <taxon>Muroidea</taxon>
        <taxon>Muridae</taxon>
        <taxon>Murinae</taxon>
        <taxon>Mus</taxon>
        <taxon>Mus</taxon>
    </lineage>
</organism>
<reference key="1">
    <citation type="journal article" date="2000" name="Biochem. Biophys. Res. Commun.">
        <title>Molecular cloning and expression analysis of a putative nuclear protein, SR-25.</title>
        <authorList>
            <person name="Sasahara K."/>
            <person name="Yamaoka T."/>
            <person name="Moritani M."/>
            <person name="Tanaka M."/>
            <person name="Iwahana H."/>
            <person name="Yoshimoto K."/>
            <person name="Miyagawa J."/>
            <person name="Kuroda Y."/>
            <person name="Itakura M."/>
        </authorList>
    </citation>
    <scope>NUCLEOTIDE SEQUENCE [MRNA]</scope>
    <scope>TISSUE SPECIFICITY</scope>
</reference>
<reference key="2">
    <citation type="journal article" date="2005" name="Science">
        <title>The transcriptional landscape of the mammalian genome.</title>
        <authorList>
            <person name="Carninci P."/>
            <person name="Kasukawa T."/>
            <person name="Katayama S."/>
            <person name="Gough J."/>
            <person name="Frith M.C."/>
            <person name="Maeda N."/>
            <person name="Oyama R."/>
            <person name="Ravasi T."/>
            <person name="Lenhard B."/>
            <person name="Wells C."/>
            <person name="Kodzius R."/>
            <person name="Shimokawa K."/>
            <person name="Bajic V.B."/>
            <person name="Brenner S.E."/>
            <person name="Batalov S."/>
            <person name="Forrest A.R."/>
            <person name="Zavolan M."/>
            <person name="Davis M.J."/>
            <person name="Wilming L.G."/>
            <person name="Aidinis V."/>
            <person name="Allen J.E."/>
            <person name="Ambesi-Impiombato A."/>
            <person name="Apweiler R."/>
            <person name="Aturaliya R.N."/>
            <person name="Bailey T.L."/>
            <person name="Bansal M."/>
            <person name="Baxter L."/>
            <person name="Beisel K.W."/>
            <person name="Bersano T."/>
            <person name="Bono H."/>
            <person name="Chalk A.M."/>
            <person name="Chiu K.P."/>
            <person name="Choudhary V."/>
            <person name="Christoffels A."/>
            <person name="Clutterbuck D.R."/>
            <person name="Crowe M.L."/>
            <person name="Dalla E."/>
            <person name="Dalrymple B.P."/>
            <person name="de Bono B."/>
            <person name="Della Gatta G."/>
            <person name="di Bernardo D."/>
            <person name="Down T."/>
            <person name="Engstrom P."/>
            <person name="Fagiolini M."/>
            <person name="Faulkner G."/>
            <person name="Fletcher C.F."/>
            <person name="Fukushima T."/>
            <person name="Furuno M."/>
            <person name="Futaki S."/>
            <person name="Gariboldi M."/>
            <person name="Georgii-Hemming P."/>
            <person name="Gingeras T.R."/>
            <person name="Gojobori T."/>
            <person name="Green R.E."/>
            <person name="Gustincich S."/>
            <person name="Harbers M."/>
            <person name="Hayashi Y."/>
            <person name="Hensch T.K."/>
            <person name="Hirokawa N."/>
            <person name="Hill D."/>
            <person name="Huminiecki L."/>
            <person name="Iacono M."/>
            <person name="Ikeo K."/>
            <person name="Iwama A."/>
            <person name="Ishikawa T."/>
            <person name="Jakt M."/>
            <person name="Kanapin A."/>
            <person name="Katoh M."/>
            <person name="Kawasawa Y."/>
            <person name="Kelso J."/>
            <person name="Kitamura H."/>
            <person name="Kitano H."/>
            <person name="Kollias G."/>
            <person name="Krishnan S.P."/>
            <person name="Kruger A."/>
            <person name="Kummerfeld S.K."/>
            <person name="Kurochkin I.V."/>
            <person name="Lareau L.F."/>
            <person name="Lazarevic D."/>
            <person name="Lipovich L."/>
            <person name="Liu J."/>
            <person name="Liuni S."/>
            <person name="McWilliam S."/>
            <person name="Madan Babu M."/>
            <person name="Madera M."/>
            <person name="Marchionni L."/>
            <person name="Matsuda H."/>
            <person name="Matsuzawa S."/>
            <person name="Miki H."/>
            <person name="Mignone F."/>
            <person name="Miyake S."/>
            <person name="Morris K."/>
            <person name="Mottagui-Tabar S."/>
            <person name="Mulder N."/>
            <person name="Nakano N."/>
            <person name="Nakauchi H."/>
            <person name="Ng P."/>
            <person name="Nilsson R."/>
            <person name="Nishiguchi S."/>
            <person name="Nishikawa S."/>
            <person name="Nori F."/>
            <person name="Ohara O."/>
            <person name="Okazaki Y."/>
            <person name="Orlando V."/>
            <person name="Pang K.C."/>
            <person name="Pavan W.J."/>
            <person name="Pavesi G."/>
            <person name="Pesole G."/>
            <person name="Petrovsky N."/>
            <person name="Piazza S."/>
            <person name="Reed J."/>
            <person name="Reid J.F."/>
            <person name="Ring B.Z."/>
            <person name="Ringwald M."/>
            <person name="Rost B."/>
            <person name="Ruan Y."/>
            <person name="Salzberg S.L."/>
            <person name="Sandelin A."/>
            <person name="Schneider C."/>
            <person name="Schoenbach C."/>
            <person name="Sekiguchi K."/>
            <person name="Semple C.A."/>
            <person name="Seno S."/>
            <person name="Sessa L."/>
            <person name="Sheng Y."/>
            <person name="Shibata Y."/>
            <person name="Shimada H."/>
            <person name="Shimada K."/>
            <person name="Silva D."/>
            <person name="Sinclair B."/>
            <person name="Sperling S."/>
            <person name="Stupka E."/>
            <person name="Sugiura K."/>
            <person name="Sultana R."/>
            <person name="Takenaka Y."/>
            <person name="Taki K."/>
            <person name="Tammoja K."/>
            <person name="Tan S.L."/>
            <person name="Tang S."/>
            <person name="Taylor M.S."/>
            <person name="Tegner J."/>
            <person name="Teichmann S.A."/>
            <person name="Ueda H.R."/>
            <person name="van Nimwegen E."/>
            <person name="Verardo R."/>
            <person name="Wei C.L."/>
            <person name="Yagi K."/>
            <person name="Yamanishi H."/>
            <person name="Zabarovsky E."/>
            <person name="Zhu S."/>
            <person name="Zimmer A."/>
            <person name="Hide W."/>
            <person name="Bult C."/>
            <person name="Grimmond S.M."/>
            <person name="Teasdale R.D."/>
            <person name="Liu E.T."/>
            <person name="Brusic V."/>
            <person name="Quackenbush J."/>
            <person name="Wahlestedt C."/>
            <person name="Mattick J.S."/>
            <person name="Hume D.A."/>
            <person name="Kai C."/>
            <person name="Sasaki D."/>
            <person name="Tomaru Y."/>
            <person name="Fukuda S."/>
            <person name="Kanamori-Katayama M."/>
            <person name="Suzuki M."/>
            <person name="Aoki J."/>
            <person name="Arakawa T."/>
            <person name="Iida J."/>
            <person name="Imamura K."/>
            <person name="Itoh M."/>
            <person name="Kato T."/>
            <person name="Kawaji H."/>
            <person name="Kawagashira N."/>
            <person name="Kawashima T."/>
            <person name="Kojima M."/>
            <person name="Kondo S."/>
            <person name="Konno H."/>
            <person name="Nakano K."/>
            <person name="Ninomiya N."/>
            <person name="Nishio T."/>
            <person name="Okada M."/>
            <person name="Plessy C."/>
            <person name="Shibata K."/>
            <person name="Shiraki T."/>
            <person name="Suzuki S."/>
            <person name="Tagami M."/>
            <person name="Waki K."/>
            <person name="Watahiki A."/>
            <person name="Okamura-Oho Y."/>
            <person name="Suzuki H."/>
            <person name="Kawai J."/>
            <person name="Hayashizaki Y."/>
        </authorList>
    </citation>
    <scope>NUCLEOTIDE SEQUENCE [LARGE SCALE MRNA]</scope>
    <source>
        <strain>C57BL/6J</strain>
    </source>
</reference>
<reference key="3">
    <citation type="journal article" date="2004" name="Genome Res.">
        <title>The status, quality, and expansion of the NIH full-length cDNA project: the Mammalian Gene Collection (MGC).</title>
        <authorList>
            <consortium name="The MGC Project Team"/>
        </authorList>
    </citation>
    <scope>NUCLEOTIDE SEQUENCE [LARGE SCALE MRNA]</scope>
    <source>
        <strain>C57BL/6J</strain>
        <tissue>Brain</tissue>
    </source>
</reference>
<reference key="4">
    <citation type="journal article" date="1999" name="FEBS Lett.">
        <title>A novel ADP-ribosylation like factor (ARL-6), interacts with the protein-conducting channel SEC61beta subunit.</title>
        <authorList>
            <person name="Ingley E."/>
            <person name="Williams J.H."/>
            <person name="Walker C.E."/>
            <person name="Tsai S."/>
            <person name="Colley S."/>
            <person name="Sayer M.S."/>
            <person name="Tilbrook P.A."/>
            <person name="Sarna M."/>
            <person name="Beaumont J.G."/>
            <person name="Klinken S.P."/>
        </authorList>
    </citation>
    <scope>NUCLEOTIDE SEQUENCE [MRNA] OF 114-177</scope>
    <scope>INTERACTION WITH ARL6</scope>
</reference>
<reference key="5">
    <citation type="journal article" date="2010" name="Cell">
        <title>A tissue-specific atlas of mouse protein phosphorylation and expression.</title>
        <authorList>
            <person name="Huttlin E.L."/>
            <person name="Jedrychowski M.P."/>
            <person name="Elias J.E."/>
            <person name="Goswami T."/>
            <person name="Rad R."/>
            <person name="Beausoleil S.A."/>
            <person name="Villen J."/>
            <person name="Haas W."/>
            <person name="Sowa M.E."/>
            <person name="Gygi S.P."/>
        </authorList>
    </citation>
    <scope>PHOSPHORYLATION [LARGE SCALE ANALYSIS] AT SER-140</scope>
    <scope>IDENTIFICATION BY MASS SPECTROMETRY [LARGE SCALE ANALYSIS]</scope>
    <source>
        <tissue>Brain</tissue>
        <tissue>Brown adipose tissue</tissue>
        <tissue>Kidney</tissue>
        <tissue>Liver</tissue>
        <tissue>Lung</tissue>
        <tissue>Pancreas</tissue>
        <tissue>Spleen</tissue>
        <tissue>Testis</tissue>
    </source>
</reference>
<name>AR6P4_MOUSE</name>